<accession>Q32H58</accession>
<dbReference type="EC" id="2.4.1.15" evidence="1"/>
<dbReference type="EMBL" id="CP000034">
    <property type="protein sequence ID" value="ABB61347.1"/>
    <property type="molecule type" value="Genomic_DNA"/>
</dbReference>
<dbReference type="RefSeq" id="WP_001295646.1">
    <property type="nucleotide sequence ID" value="NC_007606.1"/>
</dbReference>
<dbReference type="RefSeq" id="YP_402838.1">
    <property type="nucleotide sequence ID" value="NC_007606.1"/>
</dbReference>
<dbReference type="SMR" id="Q32H58"/>
<dbReference type="STRING" id="300267.SDY_1193"/>
<dbReference type="CAZy" id="GT20">
    <property type="family name" value="Glycosyltransferase Family 20"/>
</dbReference>
<dbReference type="EnsemblBacteria" id="ABB61347">
    <property type="protein sequence ID" value="ABB61347"/>
    <property type="gene ID" value="SDY_1193"/>
</dbReference>
<dbReference type="GeneID" id="93776199"/>
<dbReference type="KEGG" id="sdy:SDY_1193"/>
<dbReference type="PATRIC" id="fig|300267.13.peg.1412"/>
<dbReference type="HOGENOM" id="CLU_002351_7_1_6"/>
<dbReference type="UniPathway" id="UPA00299"/>
<dbReference type="Proteomes" id="UP000002716">
    <property type="component" value="Chromosome"/>
</dbReference>
<dbReference type="GO" id="GO:0003825">
    <property type="term" value="F:alpha,alpha-trehalose-phosphate synthase (UDP-forming) activity"/>
    <property type="evidence" value="ECO:0007669"/>
    <property type="project" value="UniProtKB-EC"/>
</dbReference>
<dbReference type="GO" id="GO:0005992">
    <property type="term" value="P:trehalose biosynthetic process"/>
    <property type="evidence" value="ECO:0007669"/>
    <property type="project" value="UniProtKB-UniPathway"/>
</dbReference>
<dbReference type="CDD" id="cd03788">
    <property type="entry name" value="GT20_TPS"/>
    <property type="match status" value="1"/>
</dbReference>
<dbReference type="FunFam" id="3.40.50.2000:FF:000024">
    <property type="entry name" value="Trehalose-6-phosphate synthase"/>
    <property type="match status" value="1"/>
</dbReference>
<dbReference type="Gene3D" id="3.40.50.2000">
    <property type="entry name" value="Glycogen Phosphorylase B"/>
    <property type="match status" value="2"/>
</dbReference>
<dbReference type="InterPro" id="IPR001830">
    <property type="entry name" value="Glyco_trans_20"/>
</dbReference>
<dbReference type="InterPro" id="IPR012766">
    <property type="entry name" value="Trehalose_OtsA"/>
</dbReference>
<dbReference type="NCBIfam" id="NF007513">
    <property type="entry name" value="PRK10117.1"/>
    <property type="match status" value="1"/>
</dbReference>
<dbReference type="NCBIfam" id="TIGR02400">
    <property type="entry name" value="trehalose_OtsA"/>
    <property type="match status" value="1"/>
</dbReference>
<dbReference type="PANTHER" id="PTHR10788:SF106">
    <property type="entry name" value="BCDNA.GH08860"/>
    <property type="match status" value="1"/>
</dbReference>
<dbReference type="PANTHER" id="PTHR10788">
    <property type="entry name" value="TREHALOSE-6-PHOSPHATE SYNTHASE"/>
    <property type="match status" value="1"/>
</dbReference>
<dbReference type="Pfam" id="PF00982">
    <property type="entry name" value="Glyco_transf_20"/>
    <property type="match status" value="1"/>
</dbReference>
<dbReference type="SUPFAM" id="SSF53756">
    <property type="entry name" value="UDP-Glycosyltransferase/glycogen phosphorylase"/>
    <property type="match status" value="1"/>
</dbReference>
<keyword id="KW-0328">Glycosyltransferase</keyword>
<keyword id="KW-1185">Reference proteome</keyword>
<keyword id="KW-0808">Transferase</keyword>
<comment type="function">
    <text evidence="1">Probably involved in the osmoprotection via the biosynthesis of trehalose. Catalyzes the transfer of glucose from UDP-alpha-D-glucose (UDP-Glc) to D-glucose 6-phosphate (Glc-6-P) to form trehalose-6-phosphate. Acts with retention of the anomeric configuration of the UDP-sugar donor.</text>
</comment>
<comment type="catalytic activity">
    <reaction evidence="1">
        <text>D-glucose 6-phosphate + UDP-alpha-D-glucose = alpha,alpha-trehalose 6-phosphate + UDP + H(+)</text>
        <dbReference type="Rhea" id="RHEA:18889"/>
        <dbReference type="ChEBI" id="CHEBI:15378"/>
        <dbReference type="ChEBI" id="CHEBI:58223"/>
        <dbReference type="ChEBI" id="CHEBI:58429"/>
        <dbReference type="ChEBI" id="CHEBI:58885"/>
        <dbReference type="ChEBI" id="CHEBI:61548"/>
        <dbReference type="EC" id="2.4.1.15"/>
    </reaction>
</comment>
<comment type="pathway">
    <text evidence="1">Glycan biosynthesis; trehalose biosynthesis.</text>
</comment>
<comment type="subunit">
    <text evidence="1">Homotetramer.</text>
</comment>
<comment type="similarity">
    <text evidence="1">Belongs to the glycosyltransferase 20 family.</text>
</comment>
<protein>
    <recommendedName>
        <fullName evidence="1">Trehalose-6-phosphate synthase</fullName>
        <shortName evidence="1">TPS</shortName>
        <ecNumber evidence="1">2.4.1.15</ecNumber>
    </recommendedName>
    <alternativeName>
        <fullName evidence="1">Alpha,alpha-trehalose-phosphate synthase [UDP-forming]</fullName>
    </alternativeName>
    <alternativeName>
        <fullName evidence="1">Osmoregulatory trehalose synthesis protein A</fullName>
        <shortName evidence="1">OtsA</shortName>
    </alternativeName>
    <alternativeName>
        <fullName evidence="1">UDP-glucose-glucosephosphate glucosyltransferase</fullName>
    </alternativeName>
</protein>
<feature type="chain" id="PRO_0000348919" description="Trehalose-6-phosphate synthase">
    <location>
        <begin position="1"/>
        <end position="474"/>
    </location>
</feature>
<feature type="binding site" evidence="1">
    <location>
        <position position="10"/>
    </location>
    <ligand>
        <name>D-glucose 6-phosphate</name>
        <dbReference type="ChEBI" id="CHEBI:61548"/>
    </ligand>
</feature>
<feature type="binding site" evidence="1">
    <location>
        <begin position="22"/>
        <end position="23"/>
    </location>
    <ligand>
        <name>UDP-alpha-D-glucose</name>
        <dbReference type="ChEBI" id="CHEBI:58885"/>
    </ligand>
</feature>
<feature type="binding site" evidence="1">
    <location>
        <position position="77"/>
    </location>
    <ligand>
        <name>D-glucose 6-phosphate</name>
        <dbReference type="ChEBI" id="CHEBI:61548"/>
    </ligand>
</feature>
<feature type="binding site" evidence="1">
    <location>
        <position position="131"/>
    </location>
    <ligand>
        <name>D-glucose 6-phosphate</name>
        <dbReference type="ChEBI" id="CHEBI:61548"/>
    </ligand>
</feature>
<feature type="binding site" evidence="1">
    <location>
        <position position="263"/>
    </location>
    <ligand>
        <name>UDP-alpha-D-glucose</name>
        <dbReference type="ChEBI" id="CHEBI:58885"/>
    </ligand>
</feature>
<feature type="binding site" evidence="1">
    <location>
        <position position="268"/>
    </location>
    <ligand>
        <name>UDP-alpha-D-glucose</name>
        <dbReference type="ChEBI" id="CHEBI:58885"/>
    </ligand>
</feature>
<feature type="binding site" evidence="1">
    <location>
        <position position="301"/>
    </location>
    <ligand>
        <name>D-glucose 6-phosphate</name>
        <dbReference type="ChEBI" id="CHEBI:61548"/>
    </ligand>
</feature>
<feature type="binding site" evidence="1">
    <location>
        <position position="340"/>
    </location>
    <ligand>
        <name>UDP-alpha-D-glucose</name>
        <dbReference type="ChEBI" id="CHEBI:58885"/>
    </ligand>
</feature>
<feature type="binding site" evidence="1">
    <location>
        <begin position="366"/>
        <end position="370"/>
    </location>
    <ligand>
        <name>UDP-alpha-D-glucose</name>
        <dbReference type="ChEBI" id="CHEBI:58885"/>
    </ligand>
</feature>
<feature type="site" description="Involved in alpha anomer selectivity" evidence="1">
    <location>
        <position position="86"/>
    </location>
</feature>
<feature type="site" description="Involved in alpha anomer selectivity" evidence="1">
    <location>
        <position position="156"/>
    </location>
</feature>
<proteinExistence type="inferred from homology"/>
<reference key="1">
    <citation type="journal article" date="2005" name="Nucleic Acids Res.">
        <title>Genome dynamics and diversity of Shigella species, the etiologic agents of bacillary dysentery.</title>
        <authorList>
            <person name="Yang F."/>
            <person name="Yang J."/>
            <person name="Zhang X."/>
            <person name="Chen L."/>
            <person name="Jiang Y."/>
            <person name="Yan Y."/>
            <person name="Tang X."/>
            <person name="Wang J."/>
            <person name="Xiong Z."/>
            <person name="Dong J."/>
            <person name="Xue Y."/>
            <person name="Zhu Y."/>
            <person name="Xu X."/>
            <person name="Sun L."/>
            <person name="Chen S."/>
            <person name="Nie H."/>
            <person name="Peng J."/>
            <person name="Xu J."/>
            <person name="Wang Y."/>
            <person name="Yuan Z."/>
            <person name="Wen Y."/>
            <person name="Yao Z."/>
            <person name="Shen Y."/>
            <person name="Qiang B."/>
            <person name="Hou Y."/>
            <person name="Yu J."/>
            <person name="Jin Q."/>
        </authorList>
    </citation>
    <scope>NUCLEOTIDE SEQUENCE [LARGE SCALE GENOMIC DNA]</scope>
    <source>
        <strain>Sd197</strain>
    </source>
</reference>
<sequence>MSRLVVVSNRIAPPDEHAASAGGLAVGILGALKAAGGLWFGWSGETGNEDQPLKKVKKGNITWASFNLSEQDLDEYYNQFSNAVLWPAFHYRLDLVQFQRPAWDGYLRVNALLADKLLPLLQDDDIIWIHDYHLLPFAHELRKRGVNNRIGFFLHIPFPTPEIFNALPTYDTLLEQLCDYDLLGFQTENDRLAFLDCLSNLTRVTTRSAKSHTAWGKAFRTEVYPIGIEPKEIAKQAAGPLPPKLAQLKAELKNVQNIFSVERLDYSKGLPERFLAYEALLEKYPQHHGKIRYTQIAPTSRGDVQAYQDIRHQLENEAGRINGKYGQLGWTPLYYLNQHFDRKLLMKIFRYSDVGLVTPLRDGMNLVAKEYVAAQDPANPGVLVLSQFAGAANELTSALIVNPYDRDEVAAALDRALTMSLAERISRHAEMLDVIVKNDINHWQECFISDLKQIVPRSAESQQRDKVATFPKLA</sequence>
<organism>
    <name type="scientific">Shigella dysenteriae serotype 1 (strain Sd197)</name>
    <dbReference type="NCBI Taxonomy" id="300267"/>
    <lineage>
        <taxon>Bacteria</taxon>
        <taxon>Pseudomonadati</taxon>
        <taxon>Pseudomonadota</taxon>
        <taxon>Gammaproteobacteria</taxon>
        <taxon>Enterobacterales</taxon>
        <taxon>Enterobacteriaceae</taxon>
        <taxon>Shigella</taxon>
    </lineage>
</organism>
<evidence type="ECO:0000250" key="1">
    <source>
        <dbReference type="UniProtKB" id="P31677"/>
    </source>
</evidence>
<gene>
    <name evidence="1" type="primary">otsA</name>
    <name type="ordered locus">SDY_1193</name>
</gene>
<name>OTSA_SHIDS</name>